<reference key="1">
    <citation type="journal article" date="1986" name="J. Mol. Evol.">
        <title>Nucleotide sequence and evolution of the orangutan epsilon globin gene region and surrounding Alu repeats.</title>
        <authorList>
            <person name="Koop B.F."/>
            <person name="Miyamoto M.M."/>
            <person name="Embury J.E."/>
            <person name="Goodman M."/>
            <person name="Czelusniak J."/>
            <person name="Slightom J.L."/>
        </authorList>
    </citation>
    <scope>NUCLEOTIDE SEQUENCE [GENOMIC DNA]</scope>
</reference>
<sequence length="147" mass="16237">MVHFTAEEKAAVTSLWSKMNVEEAGGEALGRLLVVYPWTQRFFDSFGNLSSPSAILGNPKVKAHGKKVLTSFGDAIKNMDNLKTTFAKLSELHCDKLHVDPENFKLLGNVMVIILATHFGKEFTPEVQAAWQKLVSAVAIALAHKYH</sequence>
<proteinExistence type="evidence at transcript level"/>
<evidence type="ECO:0000250" key="1">
    <source>
        <dbReference type="UniProtKB" id="P02100"/>
    </source>
</evidence>
<evidence type="ECO:0000255" key="2">
    <source>
        <dbReference type="PROSITE-ProRule" id="PRU00238"/>
    </source>
</evidence>
<name>HBE_PONPY</name>
<dbReference type="EMBL" id="X05035">
    <property type="protein sequence ID" value="CAA28709.1"/>
    <property type="molecule type" value="Genomic_DNA"/>
</dbReference>
<dbReference type="PIR" id="A27543">
    <property type="entry name" value="A27543"/>
</dbReference>
<dbReference type="SMR" id="P18994"/>
<dbReference type="GO" id="GO:0072562">
    <property type="term" value="C:blood microparticle"/>
    <property type="evidence" value="ECO:0007669"/>
    <property type="project" value="TreeGrafter"/>
</dbReference>
<dbReference type="GO" id="GO:0031838">
    <property type="term" value="C:haptoglobin-hemoglobin complex"/>
    <property type="evidence" value="ECO:0007669"/>
    <property type="project" value="TreeGrafter"/>
</dbReference>
<dbReference type="GO" id="GO:0005833">
    <property type="term" value="C:hemoglobin complex"/>
    <property type="evidence" value="ECO:0007669"/>
    <property type="project" value="InterPro"/>
</dbReference>
<dbReference type="GO" id="GO:0031720">
    <property type="term" value="F:haptoglobin binding"/>
    <property type="evidence" value="ECO:0007669"/>
    <property type="project" value="TreeGrafter"/>
</dbReference>
<dbReference type="GO" id="GO:0020037">
    <property type="term" value="F:heme binding"/>
    <property type="evidence" value="ECO:0007669"/>
    <property type="project" value="InterPro"/>
</dbReference>
<dbReference type="GO" id="GO:0031721">
    <property type="term" value="F:hemoglobin alpha binding"/>
    <property type="evidence" value="ECO:0007669"/>
    <property type="project" value="TreeGrafter"/>
</dbReference>
<dbReference type="GO" id="GO:0046872">
    <property type="term" value="F:metal ion binding"/>
    <property type="evidence" value="ECO:0007669"/>
    <property type="project" value="UniProtKB-KW"/>
</dbReference>
<dbReference type="GO" id="GO:0043177">
    <property type="term" value="F:organic acid binding"/>
    <property type="evidence" value="ECO:0007669"/>
    <property type="project" value="TreeGrafter"/>
</dbReference>
<dbReference type="GO" id="GO:0019825">
    <property type="term" value="F:oxygen binding"/>
    <property type="evidence" value="ECO:0007669"/>
    <property type="project" value="InterPro"/>
</dbReference>
<dbReference type="GO" id="GO:0005344">
    <property type="term" value="F:oxygen carrier activity"/>
    <property type="evidence" value="ECO:0007669"/>
    <property type="project" value="UniProtKB-KW"/>
</dbReference>
<dbReference type="GO" id="GO:0004601">
    <property type="term" value="F:peroxidase activity"/>
    <property type="evidence" value="ECO:0007669"/>
    <property type="project" value="TreeGrafter"/>
</dbReference>
<dbReference type="GO" id="GO:0042744">
    <property type="term" value="P:hydrogen peroxide catabolic process"/>
    <property type="evidence" value="ECO:0007669"/>
    <property type="project" value="TreeGrafter"/>
</dbReference>
<dbReference type="CDD" id="cd08925">
    <property type="entry name" value="Hb-beta-like"/>
    <property type="match status" value="1"/>
</dbReference>
<dbReference type="FunFam" id="1.10.490.10:FF:000001">
    <property type="entry name" value="Hemoglobin subunit beta"/>
    <property type="match status" value="1"/>
</dbReference>
<dbReference type="Gene3D" id="1.10.490.10">
    <property type="entry name" value="Globins"/>
    <property type="match status" value="1"/>
</dbReference>
<dbReference type="InterPro" id="IPR000971">
    <property type="entry name" value="Globin"/>
</dbReference>
<dbReference type="InterPro" id="IPR009050">
    <property type="entry name" value="Globin-like_sf"/>
</dbReference>
<dbReference type="InterPro" id="IPR012292">
    <property type="entry name" value="Globin/Proto"/>
</dbReference>
<dbReference type="InterPro" id="IPR002337">
    <property type="entry name" value="Hemoglobin_b"/>
</dbReference>
<dbReference type="InterPro" id="IPR050056">
    <property type="entry name" value="Hemoglobin_oxygen_transport"/>
</dbReference>
<dbReference type="PANTHER" id="PTHR11442">
    <property type="entry name" value="HEMOGLOBIN FAMILY MEMBER"/>
    <property type="match status" value="1"/>
</dbReference>
<dbReference type="PANTHER" id="PTHR11442:SF7">
    <property type="entry name" value="HEMOGLOBIN SUBUNIT EPSILON"/>
    <property type="match status" value="1"/>
</dbReference>
<dbReference type="Pfam" id="PF00042">
    <property type="entry name" value="Globin"/>
    <property type="match status" value="1"/>
</dbReference>
<dbReference type="PRINTS" id="PR00814">
    <property type="entry name" value="BETAHAEM"/>
</dbReference>
<dbReference type="SUPFAM" id="SSF46458">
    <property type="entry name" value="Globin-like"/>
    <property type="match status" value="1"/>
</dbReference>
<dbReference type="PROSITE" id="PS01033">
    <property type="entry name" value="GLOBIN"/>
    <property type="match status" value="1"/>
</dbReference>
<feature type="chain" id="PRO_0000053224" description="Hemoglobin subunit epsilon">
    <location>
        <begin position="1"/>
        <end position="147"/>
    </location>
</feature>
<feature type="domain" description="Globin" evidence="2">
    <location>
        <begin position="3"/>
        <end position="147"/>
    </location>
</feature>
<feature type="binding site" description="distal binding residue" evidence="2">
    <location>
        <position position="64"/>
    </location>
    <ligand>
        <name>heme b</name>
        <dbReference type="ChEBI" id="CHEBI:60344"/>
    </ligand>
    <ligandPart>
        <name>Fe</name>
        <dbReference type="ChEBI" id="CHEBI:18248"/>
    </ligandPart>
</feature>
<feature type="binding site" description="proximal binding residue" evidence="2">
    <location>
        <position position="93"/>
    </location>
    <ligand>
        <name>heme b</name>
        <dbReference type="ChEBI" id="CHEBI:60344"/>
    </ligand>
    <ligandPart>
        <name>Fe</name>
        <dbReference type="ChEBI" id="CHEBI:18248"/>
    </ligandPart>
</feature>
<feature type="modified residue" description="Phosphoserine" evidence="1">
    <location>
        <position position="14"/>
    </location>
</feature>
<feature type="modified residue" description="Phosphoserine" evidence="1">
    <location>
        <position position="51"/>
    </location>
</feature>
<organism>
    <name type="scientific">Pongo pygmaeus</name>
    <name type="common">Bornean orangutan</name>
    <dbReference type="NCBI Taxonomy" id="9600"/>
    <lineage>
        <taxon>Eukaryota</taxon>
        <taxon>Metazoa</taxon>
        <taxon>Chordata</taxon>
        <taxon>Craniata</taxon>
        <taxon>Vertebrata</taxon>
        <taxon>Euteleostomi</taxon>
        <taxon>Mammalia</taxon>
        <taxon>Eutheria</taxon>
        <taxon>Euarchontoglires</taxon>
        <taxon>Primates</taxon>
        <taxon>Haplorrhini</taxon>
        <taxon>Catarrhini</taxon>
        <taxon>Hominidae</taxon>
        <taxon>Pongo</taxon>
    </lineage>
</organism>
<accession>P18994</accession>
<protein>
    <recommendedName>
        <fullName>Hemoglobin subunit epsilon</fullName>
    </recommendedName>
    <alternativeName>
        <fullName>Epsilon-globin</fullName>
    </alternativeName>
    <alternativeName>
        <fullName>Hemoglobin epsilon chain</fullName>
    </alternativeName>
</protein>
<keyword id="KW-0349">Heme</keyword>
<keyword id="KW-0408">Iron</keyword>
<keyword id="KW-0479">Metal-binding</keyword>
<keyword id="KW-0561">Oxygen transport</keyword>
<keyword id="KW-0597">Phosphoprotein</keyword>
<keyword id="KW-0813">Transport</keyword>
<comment type="function">
    <text>The epsilon chain is a beta-type chain of early mammalian embryonic hemoglobin.</text>
</comment>
<comment type="subunit">
    <text>Heterotetramer of two alpha chains and two epsilon chains in early embryonic hemoglobin Gower-2; two zeta chains and two epsilon chains in early embryonic hemoglobin Gower-1.</text>
</comment>
<comment type="tissue specificity">
    <text>Red blood cells.</text>
</comment>
<comment type="similarity">
    <text evidence="2">Belongs to the globin family.</text>
</comment>
<gene>
    <name type="primary">HBE1</name>
</gene>